<organismHost>
    <name type="scientific">Escherichia coli</name>
    <dbReference type="NCBI Taxonomy" id="562"/>
</organismHost>
<comment type="subcellular location">
    <subcellularLocation>
        <location evidence="1">Host cytoplasm</location>
    </subcellularLocation>
</comment>
<comment type="induction">
    <text>Expressed in the early phase of the viral replicative cycle. Expression of early genes is repressed by viral Repc (latency) and favored by viral Ner protein.</text>
</comment>
<comment type="similarity">
    <text evidence="2">Belongs to the mulikevirus gp14 protein family.</text>
</comment>
<name>E15_BPD10</name>
<keyword id="KW-0244">Early protein</keyword>
<keyword id="KW-1035">Host cytoplasm</keyword>
<accession>P24795</accession>
<accession>C9DGM2</accession>
<protein>
    <recommendedName>
        <fullName>Uncharacterized protein gp14</fullName>
    </recommendedName>
    <alternativeName>
        <fullName>E15</fullName>
    </alternativeName>
    <alternativeName>
        <fullName>Gene product 14</fullName>
        <shortName>gp14</shortName>
    </alternativeName>
</protein>
<reference key="1">
    <citation type="journal article" date="1990" name="Nucleic Acids Res.">
        <title>Sequence of gene E15 of bacteriophage D108 and comparison with phage Mu.</title>
        <authorList>
            <person name="Pato M.L."/>
            <person name="Banerjee M."/>
            <person name="Wagonner B.T."/>
        </authorList>
    </citation>
    <scope>NUCLEOTIDE SEQUENCE [GENOMIC DNA]</scope>
</reference>
<reference key="2">
    <citation type="submission" date="2009-07" db="EMBL/GenBank/DDBJ databases">
        <authorList>
            <person name="Kropinski A.M."/>
            <person name="Villegas A."/>
            <person name="Lingohr E.J."/>
        </authorList>
    </citation>
    <scope>NUCLEOTIDE SEQUENCE [GENOMIC DNA]</scope>
</reference>
<evidence type="ECO:0000250" key="1"/>
<evidence type="ECO:0000305" key="2"/>
<dbReference type="EMBL" id="X54298">
    <property type="protein sequence ID" value="CAA38197.1"/>
    <property type="molecule type" value="Genomic_DNA"/>
</dbReference>
<dbReference type="EMBL" id="GQ357916">
    <property type="protein sequence ID" value="ACV50273.1"/>
    <property type="molecule type" value="Genomic_DNA"/>
</dbReference>
<dbReference type="PIR" id="S12145">
    <property type="entry name" value="S12145"/>
</dbReference>
<dbReference type="RefSeq" id="YP_003335762.1">
    <property type="nucleotide sequence ID" value="NC_013594.1"/>
</dbReference>
<dbReference type="SMR" id="P24795"/>
<dbReference type="GeneID" id="8658825"/>
<dbReference type="KEGG" id="vg:8658825"/>
<dbReference type="OrthoDB" id="32691at10239"/>
<dbReference type="Proteomes" id="UP000000320">
    <property type="component" value="Genome"/>
</dbReference>
<dbReference type="GO" id="GO:0030430">
    <property type="term" value="C:host cell cytoplasm"/>
    <property type="evidence" value="ECO:0007669"/>
    <property type="project" value="UniProtKB-SubCell"/>
</dbReference>
<feature type="chain" id="PRO_0000077787" description="Uncharacterized protein gp14">
    <location>
        <begin position="1"/>
        <end position="96"/>
    </location>
</feature>
<proteinExistence type="evidence at transcript level"/>
<organism>
    <name type="scientific">Escherichia phage D108</name>
    <name type="common">Bacteriophage D108</name>
    <dbReference type="NCBI Taxonomy" id="665033"/>
    <lineage>
        <taxon>Viruses</taxon>
        <taxon>Duplodnaviria</taxon>
        <taxon>Heunggongvirae</taxon>
        <taxon>Uroviricota</taxon>
        <taxon>Caudoviricetes</taxon>
        <taxon>Muvirus</taxon>
        <taxon>Muvirus mu</taxon>
    </lineage>
</organism>
<sequence length="96" mass="11113">MNNETKFTPKDLDEELVKAKMLERMHDVIETAISKGFSAREALEIMTREIHLIRDEVLLHNKKAHNNIVCRELGVDDSAVIPQRQYLCALMRGSRH</sequence>